<protein>
    <recommendedName>
        <fullName evidence="1">Maturase K</fullName>
    </recommendedName>
    <alternativeName>
        <fullName evidence="1">Intron maturase</fullName>
    </alternativeName>
</protein>
<name>MATK_TSUCA</name>
<sequence>MDEFHRYGKEDSSWQQCFLYPLFFQEDLYAISHDHYLDVSSSSEPMEHLSSNDKLSFLIVKRLIGQIRKQNNSIFLFVNCDPNPLVNHNKSSYSESVLEGLTLVLEVPFSIRSKYSVEGINEWKSFRSIHSIFPFLEDKFPHSNYILDTRIPYSIHPEILVRTFRRWIRDAPSLHPLRSVLYKYRNSPENLKRSIIVVPRVNTRFLLFLWNNYVYECESILVPLLKRSFHPRSSSYGSFPERTHFHRKVKHIIRNFRRNSLKSIWSLKDPKIHYVRYGERPIIAIRGTHLLVKKCRYHLPIFRQCYFHLWSEPYRVCSHQLSKNCSSSLGYSLRVRMKPLLVRTKMLDKLFITDLITDEFDPIVPIVPIIGLLAKEKFCDISGRPISKLSWTSLTDDDILDRFDRIWRNIFHYYSGSFGRDGLYRIKYILSLSCAKTLACKHKSTIRVVRKELGPELFKKYFSKEREFDYPAFSSKAAAHSQRERIWHSDIPQINPLANSWQKIQDLRIERKLI</sequence>
<geneLocation type="chloroplast"/>
<comment type="function">
    <text evidence="1">Usually encoded in the trnK tRNA gene intron. Probably assists in splicing its own and other chloroplast group II introns.</text>
</comment>
<comment type="subcellular location">
    <subcellularLocation>
        <location>Plastid</location>
        <location>Chloroplast</location>
    </subcellularLocation>
</comment>
<comment type="similarity">
    <text evidence="1">Belongs to the intron maturase 2 family. MatK subfamily.</text>
</comment>
<keyword id="KW-0150">Chloroplast</keyword>
<keyword id="KW-0507">mRNA processing</keyword>
<keyword id="KW-0934">Plastid</keyword>
<keyword id="KW-0694">RNA-binding</keyword>
<keyword id="KW-0819">tRNA processing</keyword>
<proteinExistence type="inferred from homology"/>
<feature type="chain" id="PRO_0000143771" description="Maturase K">
    <location>
        <begin position="1"/>
        <end position="514"/>
    </location>
</feature>
<accession>Q9MV49</accession>
<dbReference type="EMBL" id="AF143438">
    <property type="protein sequence ID" value="AAF69193.1"/>
    <property type="molecule type" value="Genomic_DNA"/>
</dbReference>
<dbReference type="GO" id="GO:0009507">
    <property type="term" value="C:chloroplast"/>
    <property type="evidence" value="ECO:0007669"/>
    <property type="project" value="UniProtKB-SubCell"/>
</dbReference>
<dbReference type="GO" id="GO:0003723">
    <property type="term" value="F:RNA binding"/>
    <property type="evidence" value="ECO:0007669"/>
    <property type="project" value="UniProtKB-KW"/>
</dbReference>
<dbReference type="GO" id="GO:0006397">
    <property type="term" value="P:mRNA processing"/>
    <property type="evidence" value="ECO:0007669"/>
    <property type="project" value="UniProtKB-KW"/>
</dbReference>
<dbReference type="GO" id="GO:0008380">
    <property type="term" value="P:RNA splicing"/>
    <property type="evidence" value="ECO:0007669"/>
    <property type="project" value="UniProtKB-UniRule"/>
</dbReference>
<dbReference type="GO" id="GO:0008033">
    <property type="term" value="P:tRNA processing"/>
    <property type="evidence" value="ECO:0007669"/>
    <property type="project" value="UniProtKB-KW"/>
</dbReference>
<dbReference type="HAMAP" id="MF_01390">
    <property type="entry name" value="MatK"/>
    <property type="match status" value="1"/>
</dbReference>
<dbReference type="InterPro" id="IPR024937">
    <property type="entry name" value="Domain_X"/>
</dbReference>
<dbReference type="InterPro" id="IPR002866">
    <property type="entry name" value="Maturase_MatK"/>
</dbReference>
<dbReference type="InterPro" id="IPR024942">
    <property type="entry name" value="Maturase_MatK_N"/>
</dbReference>
<dbReference type="PANTHER" id="PTHR34811">
    <property type="entry name" value="MATURASE K"/>
    <property type="match status" value="1"/>
</dbReference>
<dbReference type="PANTHER" id="PTHR34811:SF1">
    <property type="entry name" value="MATURASE K"/>
    <property type="match status" value="1"/>
</dbReference>
<dbReference type="Pfam" id="PF01348">
    <property type="entry name" value="Intron_maturas2"/>
    <property type="match status" value="1"/>
</dbReference>
<dbReference type="Pfam" id="PF01824">
    <property type="entry name" value="MatK_N"/>
    <property type="match status" value="1"/>
</dbReference>
<organism>
    <name type="scientific">Tsuga canadensis</name>
    <name type="common">Eastern hemlock</name>
    <name type="synonym">Pinus canadensis</name>
    <dbReference type="NCBI Taxonomy" id="66173"/>
    <lineage>
        <taxon>Eukaryota</taxon>
        <taxon>Viridiplantae</taxon>
        <taxon>Streptophyta</taxon>
        <taxon>Embryophyta</taxon>
        <taxon>Tracheophyta</taxon>
        <taxon>Spermatophyta</taxon>
        <taxon>Pinopsida</taxon>
        <taxon>Pinidae</taxon>
        <taxon>Conifers I</taxon>
        <taxon>Pinales</taxon>
        <taxon>Pinaceae</taxon>
        <taxon>Tsuga</taxon>
    </lineage>
</organism>
<gene>
    <name evidence="1" type="primary">matK</name>
</gene>
<evidence type="ECO:0000255" key="1">
    <source>
        <dbReference type="HAMAP-Rule" id="MF_01390"/>
    </source>
</evidence>
<reference key="1">
    <citation type="journal article" date="2000" name="Mol. Biol. Evol.">
        <title>Phylogeny and divergence times in Pinaceae: evidence from three genomes.</title>
        <authorList>
            <person name="Wang X.Q."/>
            <person name="Tank D.C."/>
            <person name="Sang T."/>
        </authorList>
    </citation>
    <scope>NUCLEOTIDE SEQUENCE [GENOMIC DNA]</scope>
</reference>